<organism>
    <name type="scientific">Bartonella bacilliformis (strain ATCC 35685 / KC583 / Herrer 020/F12,63)</name>
    <dbReference type="NCBI Taxonomy" id="360095"/>
    <lineage>
        <taxon>Bacteria</taxon>
        <taxon>Pseudomonadati</taxon>
        <taxon>Pseudomonadota</taxon>
        <taxon>Alphaproteobacteria</taxon>
        <taxon>Hyphomicrobiales</taxon>
        <taxon>Bartonellaceae</taxon>
        <taxon>Bartonella</taxon>
    </lineage>
</organism>
<sequence>MRLSQYFLPILKENPKEAEIISHCLMLRAGIIRQQTSGIYSWLPLGKKVLDKVCTIIREEQERAGALEISMPTIQSADLWRESGRYDDYGLEMLRIKDRQERDLLYGPTNEEMVTDIFRSYVRSYKDLPLNLYQIQWKFRDEIRPRFGVMRSREFLMKDGYSFDLDYESAKTSYNRMFIAYLRTFSRIGLKVIPMRADTGPIGGELSHEFIILAKTGESAVFCDKRFLEMTAPPVSVDFTDNVVLTDIVKQWTALYATTEEMHNAEEWAQICKSNQLSARGIEVGHIFYFGTKYSEPMGAKVMGRDGKEYPVFMGSYGIGPSRLVAAAIEASHDENGIIWPKPITPFDFGIINTKSDNAKCYGMCETLYQGLVNAGFDPLLDDRNERPGAKFATMDLIGLPTQIIVGPKSAAQDEVEIKDRKTGTKEVLTVEAALNRLSAM</sequence>
<keyword id="KW-0030">Aminoacyl-tRNA synthetase</keyword>
<keyword id="KW-0067">ATP-binding</keyword>
<keyword id="KW-0963">Cytoplasm</keyword>
<keyword id="KW-0436">Ligase</keyword>
<keyword id="KW-0547">Nucleotide-binding</keyword>
<keyword id="KW-0648">Protein biosynthesis</keyword>
<gene>
    <name evidence="1" type="primary">proS</name>
    <name type="ordered locus">BARBAKC583_0794</name>
</gene>
<dbReference type="EC" id="6.1.1.15" evidence="1"/>
<dbReference type="EMBL" id="CP000524">
    <property type="protein sequence ID" value="ABM44976.1"/>
    <property type="molecule type" value="Genomic_DNA"/>
</dbReference>
<dbReference type="RefSeq" id="WP_005767091.1">
    <property type="nucleotide sequence ID" value="NC_008783.1"/>
</dbReference>
<dbReference type="SMR" id="A1USY3"/>
<dbReference type="STRING" id="360095.BARBAKC583_0794"/>
<dbReference type="GeneID" id="4684547"/>
<dbReference type="KEGG" id="bbk:BARBAKC583_0794"/>
<dbReference type="PATRIC" id="fig|360095.6.peg.767"/>
<dbReference type="eggNOG" id="COG0442">
    <property type="taxonomic scope" value="Bacteria"/>
</dbReference>
<dbReference type="HOGENOM" id="CLU_016739_4_2_5"/>
<dbReference type="OrthoDB" id="9809052at2"/>
<dbReference type="Proteomes" id="UP000000643">
    <property type="component" value="Chromosome"/>
</dbReference>
<dbReference type="GO" id="GO:0005829">
    <property type="term" value="C:cytosol"/>
    <property type="evidence" value="ECO:0007669"/>
    <property type="project" value="TreeGrafter"/>
</dbReference>
<dbReference type="GO" id="GO:0005524">
    <property type="term" value="F:ATP binding"/>
    <property type="evidence" value="ECO:0007669"/>
    <property type="project" value="UniProtKB-UniRule"/>
</dbReference>
<dbReference type="GO" id="GO:0004827">
    <property type="term" value="F:proline-tRNA ligase activity"/>
    <property type="evidence" value="ECO:0007669"/>
    <property type="project" value="UniProtKB-UniRule"/>
</dbReference>
<dbReference type="GO" id="GO:0006433">
    <property type="term" value="P:prolyl-tRNA aminoacylation"/>
    <property type="evidence" value="ECO:0007669"/>
    <property type="project" value="UniProtKB-UniRule"/>
</dbReference>
<dbReference type="CDD" id="cd00861">
    <property type="entry name" value="ProRS_anticodon_short"/>
    <property type="match status" value="1"/>
</dbReference>
<dbReference type="CDD" id="cd00779">
    <property type="entry name" value="ProRS_core_prok"/>
    <property type="match status" value="1"/>
</dbReference>
<dbReference type="FunFam" id="3.30.930.10:FF:000042">
    <property type="entry name" value="probable proline--tRNA ligase, mitochondrial"/>
    <property type="match status" value="1"/>
</dbReference>
<dbReference type="FunFam" id="3.40.50.800:FF:000032">
    <property type="entry name" value="Proline--tRNA ligase"/>
    <property type="match status" value="1"/>
</dbReference>
<dbReference type="Gene3D" id="3.40.50.800">
    <property type="entry name" value="Anticodon-binding domain"/>
    <property type="match status" value="1"/>
</dbReference>
<dbReference type="Gene3D" id="3.30.930.10">
    <property type="entry name" value="Bira Bifunctional Protein, Domain 2"/>
    <property type="match status" value="1"/>
</dbReference>
<dbReference type="HAMAP" id="MF_01570">
    <property type="entry name" value="Pro_tRNA_synth_type2"/>
    <property type="match status" value="1"/>
</dbReference>
<dbReference type="InterPro" id="IPR002314">
    <property type="entry name" value="aa-tRNA-synt_IIb"/>
</dbReference>
<dbReference type="InterPro" id="IPR006195">
    <property type="entry name" value="aa-tRNA-synth_II"/>
</dbReference>
<dbReference type="InterPro" id="IPR045864">
    <property type="entry name" value="aa-tRNA-synth_II/BPL/LPL"/>
</dbReference>
<dbReference type="InterPro" id="IPR004154">
    <property type="entry name" value="Anticodon-bd"/>
</dbReference>
<dbReference type="InterPro" id="IPR036621">
    <property type="entry name" value="Anticodon-bd_dom_sf"/>
</dbReference>
<dbReference type="InterPro" id="IPR002316">
    <property type="entry name" value="Pro-tRNA-ligase_IIa"/>
</dbReference>
<dbReference type="InterPro" id="IPR004500">
    <property type="entry name" value="Pro-tRNA-synth_IIa_bac-type"/>
</dbReference>
<dbReference type="InterPro" id="IPR050062">
    <property type="entry name" value="Pro-tRNA_synthetase"/>
</dbReference>
<dbReference type="InterPro" id="IPR023716">
    <property type="entry name" value="Prolyl-tRNA_ligase_IIa_type2"/>
</dbReference>
<dbReference type="InterPro" id="IPR044140">
    <property type="entry name" value="ProRS_anticodon_short"/>
</dbReference>
<dbReference type="InterPro" id="IPR033730">
    <property type="entry name" value="ProRS_core_prok"/>
</dbReference>
<dbReference type="NCBIfam" id="NF008979">
    <property type="entry name" value="PRK12325.1"/>
    <property type="match status" value="1"/>
</dbReference>
<dbReference type="NCBIfam" id="TIGR00409">
    <property type="entry name" value="proS_fam_II"/>
    <property type="match status" value="1"/>
</dbReference>
<dbReference type="PANTHER" id="PTHR42753">
    <property type="entry name" value="MITOCHONDRIAL RIBOSOME PROTEIN L39/PROLYL-TRNA LIGASE FAMILY MEMBER"/>
    <property type="match status" value="1"/>
</dbReference>
<dbReference type="PANTHER" id="PTHR42753:SF2">
    <property type="entry name" value="PROLINE--TRNA LIGASE"/>
    <property type="match status" value="1"/>
</dbReference>
<dbReference type="Pfam" id="PF03129">
    <property type="entry name" value="HGTP_anticodon"/>
    <property type="match status" value="1"/>
</dbReference>
<dbReference type="Pfam" id="PF00587">
    <property type="entry name" value="tRNA-synt_2b"/>
    <property type="match status" value="1"/>
</dbReference>
<dbReference type="PRINTS" id="PR01046">
    <property type="entry name" value="TRNASYNTHPRO"/>
</dbReference>
<dbReference type="SUPFAM" id="SSF52954">
    <property type="entry name" value="Class II aaRS ABD-related"/>
    <property type="match status" value="1"/>
</dbReference>
<dbReference type="SUPFAM" id="SSF55681">
    <property type="entry name" value="Class II aaRS and biotin synthetases"/>
    <property type="match status" value="1"/>
</dbReference>
<dbReference type="PROSITE" id="PS50862">
    <property type="entry name" value="AA_TRNA_LIGASE_II"/>
    <property type="match status" value="1"/>
</dbReference>
<evidence type="ECO:0000255" key="1">
    <source>
        <dbReference type="HAMAP-Rule" id="MF_01570"/>
    </source>
</evidence>
<reference key="1">
    <citation type="submission" date="2006-12" db="EMBL/GenBank/DDBJ databases">
        <authorList>
            <person name="Hendrix L."/>
            <person name="Mohamoud Y."/>
            <person name="Radune D."/>
            <person name="Shvartsbeyn A."/>
            <person name="Daugherty S."/>
            <person name="Dodson R."/>
            <person name="Durkin A.S."/>
            <person name="Harkins D."/>
            <person name="Huot H."/>
            <person name="Kothari S.P."/>
            <person name="Madupu R."/>
            <person name="Li J."/>
            <person name="Nelson W.C."/>
            <person name="Shrivastava S."/>
            <person name="Giglio M.G."/>
            <person name="Haft D."/>
            <person name="Selengut J."/>
            <person name="Fraser-Ligget C."/>
            <person name="Seshadri R."/>
        </authorList>
    </citation>
    <scope>NUCLEOTIDE SEQUENCE [LARGE SCALE GENOMIC DNA]</scope>
    <source>
        <strain>ATCC 35685 / KC583 / Herrer 020/F12,63</strain>
    </source>
</reference>
<protein>
    <recommendedName>
        <fullName evidence="1">Proline--tRNA ligase</fullName>
        <ecNumber evidence="1">6.1.1.15</ecNumber>
    </recommendedName>
    <alternativeName>
        <fullName evidence="1">Prolyl-tRNA synthetase</fullName>
        <shortName evidence="1">ProRS</shortName>
    </alternativeName>
</protein>
<name>SYP_BARBK</name>
<proteinExistence type="inferred from homology"/>
<feature type="chain" id="PRO_0000288393" description="Proline--tRNA ligase">
    <location>
        <begin position="1"/>
        <end position="441"/>
    </location>
</feature>
<comment type="function">
    <text evidence="1">Catalyzes the attachment of proline to tRNA(Pro) in a two-step reaction: proline is first activated by ATP to form Pro-AMP and then transferred to the acceptor end of tRNA(Pro).</text>
</comment>
<comment type="catalytic activity">
    <reaction evidence="1">
        <text>tRNA(Pro) + L-proline + ATP = L-prolyl-tRNA(Pro) + AMP + diphosphate</text>
        <dbReference type="Rhea" id="RHEA:14305"/>
        <dbReference type="Rhea" id="RHEA-COMP:9700"/>
        <dbReference type="Rhea" id="RHEA-COMP:9702"/>
        <dbReference type="ChEBI" id="CHEBI:30616"/>
        <dbReference type="ChEBI" id="CHEBI:33019"/>
        <dbReference type="ChEBI" id="CHEBI:60039"/>
        <dbReference type="ChEBI" id="CHEBI:78442"/>
        <dbReference type="ChEBI" id="CHEBI:78532"/>
        <dbReference type="ChEBI" id="CHEBI:456215"/>
        <dbReference type="EC" id="6.1.1.15"/>
    </reaction>
</comment>
<comment type="subunit">
    <text evidence="1">Homodimer.</text>
</comment>
<comment type="subcellular location">
    <subcellularLocation>
        <location evidence="1">Cytoplasm</location>
    </subcellularLocation>
</comment>
<comment type="similarity">
    <text evidence="1">Belongs to the class-II aminoacyl-tRNA synthetase family. ProS type 2 subfamily.</text>
</comment>
<accession>A1USY3</accession>